<accession>P15720</accession>
<feature type="initiator methionine" description="Removed" evidence="3">
    <location>
        <position position="1"/>
    </location>
</feature>
<feature type="chain" id="PRO_0000158996" description="Myelin basic protein">
    <location>
        <begin position="2"/>
        <end position="174"/>
    </location>
</feature>
<feature type="region of interest" description="Disordered" evidence="2">
    <location>
        <begin position="1"/>
        <end position="86"/>
    </location>
</feature>
<feature type="region of interest" description="Disordered" evidence="2">
    <location>
        <begin position="126"/>
        <end position="174"/>
    </location>
</feature>
<feature type="compositionally biased region" description="Basic and acidic residues" evidence="2">
    <location>
        <begin position="22"/>
        <end position="35"/>
    </location>
</feature>
<feature type="compositionally biased region" description="Basic and acidic residues" evidence="2">
    <location>
        <begin position="45"/>
        <end position="61"/>
    </location>
</feature>
<feature type="compositionally biased region" description="Low complexity" evidence="2">
    <location>
        <begin position="162"/>
        <end position="174"/>
    </location>
</feature>
<feature type="modified residue" description="N-acetylalanine; in forms C1, C2 and C3" evidence="3">
    <location>
        <position position="2"/>
    </location>
</feature>
<feature type="modified residue" description="Deamidated glutamine; in forms C1 and C2; partial" evidence="3">
    <location>
        <position position="4"/>
    </location>
</feature>
<feature type="modified residue" description="Phosphoserine; in forms C2 and C3" evidence="3">
    <location>
        <position position="8"/>
    </location>
</feature>
<feature type="modified residue" description="Phosphoserine; in form C2" evidence="3">
    <location>
        <position position="19"/>
    </location>
</feature>
<feature type="modified residue" description="Citrulline; in forms C1, C2 and C3" evidence="3">
    <location>
        <position position="25"/>
    </location>
</feature>
<feature type="modified residue" description="Phosphoserine; in forms C2 and C3" evidence="3">
    <location>
        <position position="34"/>
    </location>
</feature>
<feature type="modified residue" description="Citrulline; in form C3" evidence="3">
    <location>
        <position position="42"/>
    </location>
</feature>
<feature type="modified residue" description="Phosphoserine; in forms C2 and C3" evidence="3">
    <location>
        <position position="65"/>
    </location>
</feature>
<feature type="modified residue" description="Deamidated glutamine; in forms C1, C2 and C3; partial" evidence="3">
    <location>
        <position position="72"/>
    </location>
</feature>
<feature type="modified residue" description="Phosphoserine; in form C2" evidence="3">
    <location>
        <position position="74"/>
    </location>
</feature>
<feature type="modified residue" description="Deamidated asparagine; in forms C1, C2 and C3; partial" evidence="3">
    <location>
        <position position="91"/>
    </location>
</feature>
<feature type="modified residue" description="Phosphothreonine; in forms C2 and C3" evidence="3">
    <location>
        <position position="97"/>
    </location>
</feature>
<feature type="modified residue" description="Deamidated glutamine; in form C1" evidence="3">
    <location>
        <position position="102"/>
    </location>
</feature>
<feature type="modified residue" description="Deamidated glutamine; in forms C1, C2 and C3; partial" evidence="3">
    <location>
        <position position="102"/>
    </location>
</feature>
<feature type="modified residue" description="Omega-N-methylarginine; in forms C1, C2 and C3; alternate" evidence="3">
    <location>
        <position position="106"/>
    </location>
</feature>
<feature type="modified residue" description="Symmetric dimethylarginine; in forms C1, C2 and C3; alternate" evidence="3">
    <location>
        <position position="106"/>
    </location>
</feature>
<feature type="modified residue" description="Phosphoserine; in forms C2 and C3" evidence="3">
    <location>
        <position position="114"/>
    </location>
</feature>
<feature type="modified residue" description="Phosphoserine; in forms C2 and C3" evidence="3">
    <location>
        <position position="142"/>
    </location>
</feature>
<feature type="modified residue" description="Deamidated glutamine; in forms C1, C2 and C3; partial" evidence="3">
    <location>
        <position position="147"/>
    </location>
</feature>
<feature type="modified residue" description="Phosphoserine; in forms C2 and C3" evidence="3">
    <location>
        <position position="165"/>
    </location>
</feature>
<feature type="modified residue" description="Citrulline; in forms C2 and C3" evidence="3">
    <location>
        <position position="166"/>
    </location>
</feature>
<feature type="modified residue" description="Phosphoserine; in forms C2 and C3" evidence="3">
    <location>
        <position position="169"/>
    </location>
</feature>
<feature type="splice variant" id="VSP_003323" description="In isoform 2." evidence="4">
    <location>
        <begin position="105"/>
        <end position="115"/>
    </location>
</feature>
<organism>
    <name type="scientific">Gallus gallus</name>
    <name type="common">Chicken</name>
    <dbReference type="NCBI Taxonomy" id="9031"/>
    <lineage>
        <taxon>Eukaryota</taxon>
        <taxon>Metazoa</taxon>
        <taxon>Chordata</taxon>
        <taxon>Craniata</taxon>
        <taxon>Vertebrata</taxon>
        <taxon>Euteleostomi</taxon>
        <taxon>Archelosauria</taxon>
        <taxon>Archosauria</taxon>
        <taxon>Dinosauria</taxon>
        <taxon>Saurischia</taxon>
        <taxon>Theropoda</taxon>
        <taxon>Coelurosauria</taxon>
        <taxon>Aves</taxon>
        <taxon>Neognathae</taxon>
        <taxon>Galloanserae</taxon>
        <taxon>Galliformes</taxon>
        <taxon>Phasianidae</taxon>
        <taxon>Phasianinae</taxon>
        <taxon>Gallus</taxon>
    </lineage>
</organism>
<reference key="1">
    <citation type="journal article" date="1989" name="Glia">
        <title>Developmental accumulation and heterogeneity of myelin basic protein transcripts in the chick visual system.</title>
        <authorList>
            <person name="Zopf D."/>
            <person name="Sonntag H."/>
            <person name="Betz H."/>
            <person name="Gundelfinger E.D."/>
        </authorList>
    </citation>
    <scope>NUCLEOTIDE SEQUENCE [MRNA] (ISOFORMS 1 AND 2)</scope>
    <source>
        <strain>White leghorn</strain>
        <tissue>Optic lobe</tissue>
    </source>
</reference>
<reference key="2">
    <citation type="journal article" date="2009" name="Neurochem. Res.">
        <title>Post-translational modifications of chicken myelin basic protein charge components.</title>
        <authorList>
            <person name="Kim J."/>
            <person name="Zhang R."/>
            <person name="Strittmatter E.F."/>
            <person name="Smith R.D."/>
            <person name="Zand R."/>
        </authorList>
    </citation>
    <scope>CLEAVAGE OF INITIATOR METHIONINE</scope>
    <scope>ACETYLATION AT ALA-2</scope>
    <scope>PHOSPHORYLATION AT SER-8; SER-19; SER-34; SER-65; SER-74; THR-97; SER-114; SER-142; SER-165 AND SER-169</scope>
    <scope>METHYLATION AT ARG-106</scope>
    <scope>DEAMIDATION AT GLN-4; GLN-72; ASN-91; GLN-102 AND GLN-147</scope>
    <scope>CITRULLINATION AT ARG-25; ARG-42 AND ARG-166</scope>
    <scope>IDENTIFICATION BY MASS SPECTROMETRY</scope>
</reference>
<comment type="function">
    <text evidence="1">Is, with PLP, the most abundant protein component of the myelin membrane in the CNS. Has a role in both the formation and stabilization of this compact multilayer arrangement of bilayers. Each splice variant and charge isomer may have a specialized function in the assembly of an optimized, biochemically functional myelin membrane (By similarity).</text>
</comment>
<comment type="subunit">
    <text evidence="1">Homodimer.</text>
</comment>
<comment type="subcellular location">
    <subcellularLocation>
        <location>Myelin membrane</location>
        <topology>Peripheral membrane protein</topology>
        <orientation>Cytoplasmic side</orientation>
    </subcellularLocation>
    <text>Cytoplasmic side of myelin.</text>
</comment>
<comment type="alternative products">
    <event type="alternative splicing"/>
    <isoform>
        <id>P15720-1</id>
        <name>1</name>
        <sequence type="displayed"/>
    </isoform>
    <isoform>
        <id>P15720-2</id>
        <name>2</name>
        <sequence type="described" ref="VSP_003323"/>
    </isoform>
    <text>Additional isoforms seem to exist.</text>
</comment>
<comment type="developmental stage">
    <text>In the optic lobe, first detected at embryonic day 14. Expression strongly increases between embryonic days 16 and 18, reaches a maximum at postnatal day 1, and then declines again to the adult level.</text>
</comment>
<comment type="PTM">
    <text evidence="3">Several charge isomers are produced as a result of optional post-translational modifications, such as phosphorylation of serine or threonine residues, deamidation of glutamine or asparagine residues, citrullination and methylation of arginine residues. Chicken MBP contains 4 charge components denoted as C1, C2, C3 and C8. C1 lacks any phosphorylation sites, whereas C2 and C3 contain respectively 10 and 8 phosphorylation sites and arginine residues modified to citrulline. All three charge components contain deamidated glutamines and asparagine, and a methylated arginine.</text>
</comment>
<comment type="miscellaneous">
    <molecule>Isoform 1</molecule>
    <text>Major isoform.</text>
</comment>
<comment type="similarity">
    <text evidence="5">Belongs to the myelin basic protein family.</text>
</comment>
<evidence type="ECO:0000250" key="1"/>
<evidence type="ECO:0000256" key="2">
    <source>
        <dbReference type="SAM" id="MobiDB-lite"/>
    </source>
</evidence>
<evidence type="ECO:0000269" key="3">
    <source>
    </source>
</evidence>
<evidence type="ECO:0000303" key="4">
    <source>
    </source>
</evidence>
<evidence type="ECO:0000305" key="5"/>
<gene>
    <name type="primary">MBP</name>
</gene>
<dbReference type="EMBL" id="X17103">
    <property type="protein sequence ID" value="CAA34959.1"/>
    <property type="molecule type" value="mRNA"/>
</dbReference>
<dbReference type="PIR" id="S08535">
    <property type="entry name" value="S08535"/>
</dbReference>
<dbReference type="RefSeq" id="NP_990611.1">
    <molecule id="P15720-1"/>
    <property type="nucleotide sequence ID" value="NM_205280.1"/>
</dbReference>
<dbReference type="SMR" id="P15720"/>
<dbReference type="FunCoup" id="P15720">
    <property type="interactions" value="409"/>
</dbReference>
<dbReference type="STRING" id="9031.ENSGALP00000065604"/>
<dbReference type="iPTMnet" id="P15720"/>
<dbReference type="PaxDb" id="9031-ENSGALP00000022148"/>
<dbReference type="GeneID" id="396217"/>
<dbReference type="KEGG" id="gga:396217"/>
<dbReference type="CTD" id="4155"/>
<dbReference type="VEuPathDB" id="HostDB:geneid_396217"/>
<dbReference type="eggNOG" id="ENOG502S4SJ">
    <property type="taxonomic scope" value="Eukaryota"/>
</dbReference>
<dbReference type="HOGENOM" id="CLU_102586_0_0_1"/>
<dbReference type="InParanoid" id="P15720"/>
<dbReference type="OrthoDB" id="8862162at2759"/>
<dbReference type="PhylomeDB" id="P15720"/>
<dbReference type="PRO" id="PR:P15720"/>
<dbReference type="Proteomes" id="UP000000539">
    <property type="component" value="Chromosome 2"/>
</dbReference>
<dbReference type="Bgee" id="ENSGALG00000013640">
    <property type="expression patterns" value="Expressed in cerebellum and 11 other cell types or tissues"/>
</dbReference>
<dbReference type="GO" id="GO:0043209">
    <property type="term" value="C:myelin sheath"/>
    <property type="evidence" value="ECO:0007669"/>
    <property type="project" value="UniProtKB-SubCell"/>
</dbReference>
<dbReference type="GO" id="GO:0005886">
    <property type="term" value="C:plasma membrane"/>
    <property type="evidence" value="ECO:0007669"/>
    <property type="project" value="UniProtKB-KW"/>
</dbReference>
<dbReference type="GO" id="GO:0019911">
    <property type="term" value="F:structural constituent of myelin sheath"/>
    <property type="evidence" value="ECO:0007669"/>
    <property type="project" value="InterPro"/>
</dbReference>
<dbReference type="InterPro" id="IPR000548">
    <property type="entry name" value="Myelin_BP"/>
</dbReference>
<dbReference type="PANTHER" id="PTHR11429">
    <property type="entry name" value="MYELIN BASIC PROTEIN"/>
    <property type="match status" value="1"/>
</dbReference>
<dbReference type="PANTHER" id="PTHR11429:SF0">
    <property type="entry name" value="MYELIN BASIC PROTEIN"/>
    <property type="match status" value="1"/>
</dbReference>
<dbReference type="Pfam" id="PF01669">
    <property type="entry name" value="Myelin_MBP"/>
    <property type="match status" value="1"/>
</dbReference>
<dbReference type="PRINTS" id="PR00212">
    <property type="entry name" value="MYELINMBP"/>
</dbReference>
<dbReference type="PROSITE" id="PS00569">
    <property type="entry name" value="MYELIN_MBP"/>
    <property type="match status" value="1"/>
</dbReference>
<keyword id="KW-0007">Acetylation</keyword>
<keyword id="KW-0025">Alternative splicing</keyword>
<keyword id="KW-1003">Cell membrane</keyword>
<keyword id="KW-0164">Citrullination</keyword>
<keyword id="KW-0472">Membrane</keyword>
<keyword id="KW-0488">Methylation</keyword>
<keyword id="KW-0597">Phosphoprotein</keyword>
<keyword id="KW-1185">Reference proteome</keyword>
<name>MBP_CHICK</name>
<proteinExistence type="evidence at protein level"/>
<sequence length="174" mass="18808">MASQKRSSFRHGSKMASASTTDHARHGSPRHRDSGLLDSLGRFFGGDRHVPRRGFGKDIHAARASHVGSIPQRSQHGRPGDDNPVVHFFKNIVSPRTPPPMQAKGRGLSLTRFSWGGEGHKPGYGSGKFYEHKSAHKGHKGSYHEGQGTLSKIFKLGGSGSRPGSRSGSPVARR</sequence>
<protein>
    <recommendedName>
        <fullName>Myelin basic protein</fullName>
        <shortName>MBP</shortName>
    </recommendedName>
</protein>